<evidence type="ECO:0000250" key="1">
    <source>
        <dbReference type="UniProtKB" id="Q80Y86"/>
    </source>
</evidence>
<evidence type="ECO:0000250" key="2">
    <source>
        <dbReference type="UniProtKB" id="Q8TD08"/>
    </source>
</evidence>
<evidence type="ECO:0000255" key="3">
    <source>
        <dbReference type="PROSITE-ProRule" id="PRU00159"/>
    </source>
</evidence>
<evidence type="ECO:0000256" key="4">
    <source>
        <dbReference type="SAM" id="MobiDB-lite"/>
    </source>
</evidence>
<evidence type="ECO:0000269" key="5">
    <source>
    </source>
</evidence>
<evidence type="ECO:0000269" key="6">
    <source>
    </source>
</evidence>
<evidence type="ECO:0000269" key="7">
    <source>
    </source>
</evidence>
<evidence type="ECO:0000269" key="8">
    <source>
    </source>
</evidence>
<evidence type="ECO:0000303" key="9">
    <source>
    </source>
</evidence>
<evidence type="ECO:0000303" key="10">
    <source>
    </source>
</evidence>
<evidence type="ECO:0000305" key="11"/>
<gene>
    <name type="primary">Mapk15</name>
    <name evidence="10" type="synonym">Erk7</name>
    <name evidence="9" type="synonym">Erk8</name>
</gene>
<name>MK15_RAT</name>
<keyword id="KW-0067">ATP-binding</keyword>
<keyword id="KW-0965">Cell junction</keyword>
<keyword id="KW-0966">Cell projection</keyword>
<keyword id="KW-0963">Cytoplasm</keyword>
<keyword id="KW-0968">Cytoplasmic vesicle</keyword>
<keyword id="KW-0206">Cytoskeleton</keyword>
<keyword id="KW-0903">Direct protein sequencing</keyword>
<keyword id="KW-0333">Golgi apparatus</keyword>
<keyword id="KW-0418">Kinase</keyword>
<keyword id="KW-0488">Methylation</keyword>
<keyword id="KW-0547">Nucleotide-binding</keyword>
<keyword id="KW-0539">Nucleus</keyword>
<keyword id="KW-0597">Phosphoprotein</keyword>
<keyword id="KW-1185">Reference proteome</keyword>
<keyword id="KW-0677">Repeat</keyword>
<keyword id="KW-0723">Serine/threonine-protein kinase</keyword>
<keyword id="KW-0796">Tight junction</keyword>
<keyword id="KW-0808">Transferase</keyword>
<keyword id="KW-0832">Ubl conjugation</keyword>
<proteinExistence type="evidence at protein level"/>
<reference key="1">
    <citation type="journal article" date="1999" name="Mol. Cell. Biol.">
        <title>Extracellular signal-regulated kinase 7 (ERK7), a novel ERK with a C-terminal domain that regulates its activity, its cellular localization, and cell growth.</title>
        <authorList>
            <person name="Abe M.K."/>
            <person name="Kuo W.-L."/>
            <person name="Hershenson M.B."/>
            <person name="Rosner M.R."/>
        </authorList>
    </citation>
    <scope>NUCLEOTIDE SEQUENCE [MRNA]</scope>
    <scope>FUNCTION</scope>
    <scope>DOMAIN</scope>
    <scope>TISSUE SPECIFICITY</scope>
    <scope>SUBCELLULAR LOCATION</scope>
    <scope>CHARACTERIZATION</scope>
    <scope>PHOSPHORYLATION AT THR-176 AND TYR-178</scope>
    <scope>MUTAGENESIS OF LYS-43; THR-176; TYR-178 AND 176-THR--TYR-178</scope>
    <scope>ACTIVITY REGULATION</scope>
    <source>
        <strain>Sprague-Dawley</strain>
        <tissue>Testis</tissue>
    </source>
</reference>
<reference key="2">
    <citation type="submission" date="2007-07" db="UniProtKB">
        <authorList>
            <person name="Lubec G."/>
            <person name="Kang S.U."/>
        </authorList>
    </citation>
    <scope>PROTEIN SEQUENCE OF 154-161</scope>
    <scope>IDENTIFICATION BY MASS SPECTROMETRY</scope>
    <source>
        <strain>Sprague-Dawley</strain>
        <tissue>Brain</tissue>
    </source>
</reference>
<reference key="3">
    <citation type="journal article" date="1999" name="J. Biol. Chem.">
        <title>Molecular cloning and characterization of a mitogen-activated protein kinase-associated intracellular chloride channel.</title>
        <authorList>
            <person name="Qian Z."/>
            <person name="Okuhara D."/>
            <person name="Abe M.K."/>
            <person name="Rosner M.R."/>
        </authorList>
    </citation>
    <scope>INTERACTION WITH CLIC3</scope>
    <scope>SUBCELLULAR LOCATION</scope>
</reference>
<reference key="4">
    <citation type="journal article" date="2001" name="J. Biol. Chem.">
        <title>ERK7 is an autoactivated member of the MAPK family.</title>
        <authorList>
            <person name="Abe M.K."/>
            <person name="Kahle K.T."/>
            <person name="Saelzler M.P."/>
            <person name="Orth K."/>
            <person name="Dixon J.E."/>
            <person name="Rosner M.R."/>
        </authorList>
    </citation>
    <scope>DOMAIN</scope>
    <scope>CHARACTERIZATION</scope>
</reference>
<reference key="5">
    <citation type="journal article" date="2002" name="J. Biol. Chem.">
        <title>ERK8, a new member of the mitogen-activated protein kinase family.</title>
        <authorList>
            <person name="Abe M.K."/>
            <person name="Saelzler M.P."/>
            <person name="Espinosa R. III"/>
            <person name="Kahle K.T."/>
            <person name="Hershenson M.B."/>
            <person name="Le Beau M.M."/>
            <person name="Rosner M.R."/>
        </authorList>
    </citation>
    <scope>FUNCTION</scope>
</reference>
<reference key="6">
    <citation type="journal article" date="2004" name="J. Biol. Chem.">
        <title>ERK7 expression and kinase activity is regulated by the ubiquitin-proteosome pathway.</title>
        <authorList>
            <person name="Kuo W.-L."/>
            <person name="Duke C.J."/>
            <person name="Abe M.K."/>
            <person name="Kaplan E.L."/>
            <person name="Gomes S."/>
            <person name="Rosner M.R."/>
        </authorList>
    </citation>
    <scope>UBIQUITINATION</scope>
    <scope>TISSUE SPECIFICITY</scope>
</reference>
<accession>Q9Z2A6</accession>
<organism>
    <name type="scientific">Rattus norvegicus</name>
    <name type="common">Rat</name>
    <dbReference type="NCBI Taxonomy" id="10116"/>
    <lineage>
        <taxon>Eukaryota</taxon>
        <taxon>Metazoa</taxon>
        <taxon>Chordata</taxon>
        <taxon>Craniata</taxon>
        <taxon>Vertebrata</taxon>
        <taxon>Euteleostomi</taxon>
        <taxon>Mammalia</taxon>
        <taxon>Eutheria</taxon>
        <taxon>Euarchontoglires</taxon>
        <taxon>Glires</taxon>
        <taxon>Rodentia</taxon>
        <taxon>Myomorpha</taxon>
        <taxon>Muroidea</taxon>
        <taxon>Muridae</taxon>
        <taxon>Murinae</taxon>
        <taxon>Rattus</taxon>
    </lineage>
</organism>
<dbReference type="EC" id="2.7.11.24"/>
<dbReference type="EMBL" id="AF078798">
    <property type="protein sequence ID" value="AAD12719.2"/>
    <property type="molecule type" value="mRNA"/>
</dbReference>
<dbReference type="RefSeq" id="NP_775453.1">
    <property type="nucleotide sequence ID" value="NM_173331.2"/>
</dbReference>
<dbReference type="RefSeq" id="XP_006241841.1">
    <property type="nucleotide sequence ID" value="XM_006241779.5"/>
</dbReference>
<dbReference type="SMR" id="Q9Z2A6"/>
<dbReference type="FunCoup" id="Q9Z2A6">
    <property type="interactions" value="237"/>
</dbReference>
<dbReference type="IntAct" id="Q9Z2A6">
    <property type="interactions" value="1"/>
</dbReference>
<dbReference type="MINT" id="Q9Z2A6"/>
<dbReference type="STRING" id="10116.ENSRNOP00000075332"/>
<dbReference type="iPTMnet" id="Q9Z2A6"/>
<dbReference type="PhosphoSitePlus" id="Q9Z2A6"/>
<dbReference type="jPOST" id="Q9Z2A6"/>
<dbReference type="PaxDb" id="10116-ENSRNOP00000012460"/>
<dbReference type="Ensembl" id="ENSRNOT00000012461.5">
    <property type="protein sequence ID" value="ENSRNOP00000012460.3"/>
    <property type="gene ID" value="ENSRNOG00000009336.6"/>
</dbReference>
<dbReference type="GeneID" id="286997"/>
<dbReference type="KEGG" id="rno:286997"/>
<dbReference type="AGR" id="RGD:628675"/>
<dbReference type="CTD" id="225689"/>
<dbReference type="RGD" id="628675">
    <property type="gene designation" value="Mapk15"/>
</dbReference>
<dbReference type="eggNOG" id="KOG0660">
    <property type="taxonomic scope" value="Eukaryota"/>
</dbReference>
<dbReference type="GeneTree" id="ENSGT00940000159758"/>
<dbReference type="HOGENOM" id="CLU_000288_181_14_1"/>
<dbReference type="InParanoid" id="Q9Z2A6"/>
<dbReference type="OrthoDB" id="192887at2759"/>
<dbReference type="PhylomeDB" id="Q9Z2A6"/>
<dbReference type="TreeFam" id="TF105101"/>
<dbReference type="PRO" id="PR:Q9Z2A6"/>
<dbReference type="Proteomes" id="UP000002494">
    <property type="component" value="Chromosome 7"/>
</dbReference>
<dbReference type="Bgee" id="ENSRNOG00000009336">
    <property type="expression patterns" value="Expressed in testis and 12 other cell types or tissues"/>
</dbReference>
<dbReference type="ExpressionAtlas" id="Q9Z2A6">
    <property type="expression patterns" value="baseline and differential"/>
</dbReference>
<dbReference type="GO" id="GO:0005776">
    <property type="term" value="C:autophagosome"/>
    <property type="evidence" value="ECO:0000250"/>
    <property type="project" value="UniProtKB"/>
</dbReference>
<dbReference type="GO" id="GO:0005923">
    <property type="term" value="C:bicellular tight junction"/>
    <property type="evidence" value="ECO:0007669"/>
    <property type="project" value="UniProtKB-SubCell"/>
</dbReference>
<dbReference type="GO" id="GO:0005911">
    <property type="term" value="C:cell-cell junction"/>
    <property type="evidence" value="ECO:0000250"/>
    <property type="project" value="UniProtKB"/>
</dbReference>
<dbReference type="GO" id="GO:0005814">
    <property type="term" value="C:centriole"/>
    <property type="evidence" value="ECO:0000250"/>
    <property type="project" value="UniProtKB"/>
</dbReference>
<dbReference type="GO" id="GO:0036064">
    <property type="term" value="C:ciliary basal body"/>
    <property type="evidence" value="ECO:0000250"/>
    <property type="project" value="UniProtKB"/>
</dbReference>
<dbReference type="GO" id="GO:0005737">
    <property type="term" value="C:cytoplasm"/>
    <property type="evidence" value="ECO:0000250"/>
    <property type="project" value="UniProtKB"/>
</dbReference>
<dbReference type="GO" id="GO:0031410">
    <property type="term" value="C:cytoplasmic vesicle"/>
    <property type="evidence" value="ECO:0007669"/>
    <property type="project" value="UniProtKB-KW"/>
</dbReference>
<dbReference type="GO" id="GO:0005794">
    <property type="term" value="C:Golgi apparatus"/>
    <property type="evidence" value="ECO:0000250"/>
    <property type="project" value="UniProtKB"/>
</dbReference>
<dbReference type="GO" id="GO:0072687">
    <property type="term" value="C:meiotic spindle"/>
    <property type="evidence" value="ECO:0000266"/>
    <property type="project" value="RGD"/>
</dbReference>
<dbReference type="GO" id="GO:0005634">
    <property type="term" value="C:nucleus"/>
    <property type="evidence" value="ECO:0000314"/>
    <property type="project" value="UniProtKB"/>
</dbReference>
<dbReference type="GO" id="GO:0005524">
    <property type="term" value="F:ATP binding"/>
    <property type="evidence" value="ECO:0007669"/>
    <property type="project" value="UniProtKB-KW"/>
</dbReference>
<dbReference type="GO" id="GO:0003682">
    <property type="term" value="F:chromatin binding"/>
    <property type="evidence" value="ECO:0000250"/>
    <property type="project" value="UniProtKB"/>
</dbReference>
<dbReference type="GO" id="GO:0016301">
    <property type="term" value="F:kinase activity"/>
    <property type="evidence" value="ECO:0000250"/>
    <property type="project" value="UniProtKB"/>
</dbReference>
<dbReference type="GO" id="GO:0004707">
    <property type="term" value="F:MAP kinase activity"/>
    <property type="evidence" value="ECO:0000250"/>
    <property type="project" value="UniProtKB"/>
</dbReference>
<dbReference type="GO" id="GO:0004672">
    <property type="term" value="F:protein kinase activity"/>
    <property type="evidence" value="ECO:0000250"/>
    <property type="project" value="UniProtKB"/>
</dbReference>
<dbReference type="GO" id="GO:0106310">
    <property type="term" value="F:protein serine kinase activity"/>
    <property type="evidence" value="ECO:0007669"/>
    <property type="project" value="RHEA"/>
</dbReference>
<dbReference type="GO" id="GO:0004674">
    <property type="term" value="F:protein serine/threonine kinase activity"/>
    <property type="evidence" value="ECO:0000318"/>
    <property type="project" value="GO_Central"/>
</dbReference>
<dbReference type="GO" id="GO:0006974">
    <property type="term" value="P:DNA damage response"/>
    <property type="evidence" value="ECO:0000266"/>
    <property type="project" value="RGD"/>
</dbReference>
<dbReference type="GO" id="GO:0090494">
    <property type="term" value="P:dopamine uptake"/>
    <property type="evidence" value="ECO:0000250"/>
    <property type="project" value="UniProtKB"/>
</dbReference>
<dbReference type="GO" id="GO:0007029">
    <property type="term" value="P:endoplasmic reticulum organization"/>
    <property type="evidence" value="ECO:0000250"/>
    <property type="project" value="UniProtKB"/>
</dbReference>
<dbReference type="GO" id="GO:0035556">
    <property type="term" value="P:intracellular signal transduction"/>
    <property type="evidence" value="ECO:0000318"/>
    <property type="project" value="GO_Central"/>
</dbReference>
<dbReference type="GO" id="GO:0030336">
    <property type="term" value="P:negative regulation of cell migration"/>
    <property type="evidence" value="ECO:0000250"/>
    <property type="project" value="UniProtKB"/>
</dbReference>
<dbReference type="GO" id="GO:0008156">
    <property type="term" value="P:negative regulation of DNA replication"/>
    <property type="evidence" value="ECO:0000315"/>
    <property type="project" value="RGD"/>
</dbReference>
<dbReference type="GO" id="GO:0000122">
    <property type="term" value="P:negative regulation of transcription by RNA polymerase II"/>
    <property type="evidence" value="ECO:0000315"/>
    <property type="project" value="RGD"/>
</dbReference>
<dbReference type="GO" id="GO:0008284">
    <property type="term" value="P:positive regulation of cell population proliferation"/>
    <property type="evidence" value="ECO:0000250"/>
    <property type="project" value="UniProtKB"/>
</dbReference>
<dbReference type="GO" id="GO:1905188">
    <property type="term" value="P:positive regulation of metaphase/anaphase transition of meiosis I"/>
    <property type="evidence" value="ECO:0000266"/>
    <property type="project" value="RGD"/>
</dbReference>
<dbReference type="GO" id="GO:0045732">
    <property type="term" value="P:positive regulation of protein catabolic process"/>
    <property type="evidence" value="ECO:0000315"/>
    <property type="project" value="RGD"/>
</dbReference>
<dbReference type="GO" id="GO:0031398">
    <property type="term" value="P:positive regulation of protein ubiquitination"/>
    <property type="evidence" value="ECO:0000315"/>
    <property type="project" value="RGD"/>
</dbReference>
<dbReference type="GO" id="GO:1905832">
    <property type="term" value="P:positive regulation of spindle assembly"/>
    <property type="evidence" value="ECO:0000266"/>
    <property type="project" value="RGD"/>
</dbReference>
<dbReference type="GO" id="GO:0032206">
    <property type="term" value="P:positive regulation of telomere maintenance"/>
    <property type="evidence" value="ECO:0000266"/>
    <property type="project" value="RGD"/>
</dbReference>
<dbReference type="GO" id="GO:0045944">
    <property type="term" value="P:positive regulation of transcription by RNA polymerase II"/>
    <property type="evidence" value="ECO:0000266"/>
    <property type="project" value="RGD"/>
</dbReference>
<dbReference type="GO" id="GO:0046777">
    <property type="term" value="P:protein autophosphorylation"/>
    <property type="evidence" value="ECO:0000250"/>
    <property type="project" value="UniProtKB"/>
</dbReference>
<dbReference type="GO" id="GO:1904491">
    <property type="term" value="P:protein localization to ciliary transition zone"/>
    <property type="evidence" value="ECO:0000266"/>
    <property type="project" value="RGD"/>
</dbReference>
<dbReference type="GO" id="GO:0010506">
    <property type="term" value="P:regulation of autophagy"/>
    <property type="evidence" value="ECO:0000250"/>
    <property type="project" value="UniProtKB"/>
</dbReference>
<dbReference type="GO" id="GO:1902017">
    <property type="term" value="P:regulation of cilium assembly"/>
    <property type="evidence" value="ECO:0000250"/>
    <property type="project" value="UniProtKB"/>
</dbReference>
<dbReference type="GO" id="GO:0003400">
    <property type="term" value="P:regulation of COPII vesicle coating"/>
    <property type="evidence" value="ECO:0000250"/>
    <property type="project" value="UniProtKB"/>
</dbReference>
<dbReference type="GO" id="GO:0032355">
    <property type="term" value="P:response to estradiol"/>
    <property type="evidence" value="ECO:0000315"/>
    <property type="project" value="RGD"/>
</dbReference>
<dbReference type="CDD" id="cd07852">
    <property type="entry name" value="STKc_MAPK15-like"/>
    <property type="match status" value="1"/>
</dbReference>
<dbReference type="FunFam" id="1.10.510.10:FF:000238">
    <property type="entry name" value="Mitogen-activated protein kinase"/>
    <property type="match status" value="1"/>
</dbReference>
<dbReference type="FunFam" id="3.30.200.20:FF:000166">
    <property type="entry name" value="Mitogen-activated protein kinase"/>
    <property type="match status" value="1"/>
</dbReference>
<dbReference type="Gene3D" id="3.30.200.20">
    <property type="entry name" value="Phosphorylase Kinase, domain 1"/>
    <property type="match status" value="1"/>
</dbReference>
<dbReference type="Gene3D" id="1.10.510.10">
    <property type="entry name" value="Transferase(Phosphotransferase) domain 1"/>
    <property type="match status" value="1"/>
</dbReference>
<dbReference type="InterPro" id="IPR011009">
    <property type="entry name" value="Kinase-like_dom_sf"/>
</dbReference>
<dbReference type="InterPro" id="IPR050117">
    <property type="entry name" value="MAP_kinase"/>
</dbReference>
<dbReference type="InterPro" id="IPR003527">
    <property type="entry name" value="MAP_kinase_CS"/>
</dbReference>
<dbReference type="InterPro" id="IPR000719">
    <property type="entry name" value="Prot_kinase_dom"/>
</dbReference>
<dbReference type="InterPro" id="IPR017441">
    <property type="entry name" value="Protein_kinase_ATP_BS"/>
</dbReference>
<dbReference type="PANTHER" id="PTHR24055">
    <property type="entry name" value="MITOGEN-ACTIVATED PROTEIN KINASE"/>
    <property type="match status" value="1"/>
</dbReference>
<dbReference type="Pfam" id="PF00069">
    <property type="entry name" value="Pkinase"/>
    <property type="match status" value="1"/>
</dbReference>
<dbReference type="SUPFAM" id="SSF56112">
    <property type="entry name" value="Protein kinase-like (PK-like)"/>
    <property type="match status" value="1"/>
</dbReference>
<dbReference type="PROSITE" id="PS01351">
    <property type="entry name" value="MAPK"/>
    <property type="match status" value="1"/>
</dbReference>
<dbReference type="PROSITE" id="PS00107">
    <property type="entry name" value="PROTEIN_KINASE_ATP"/>
    <property type="match status" value="1"/>
</dbReference>
<dbReference type="PROSITE" id="PS50011">
    <property type="entry name" value="PROTEIN_KINASE_DOM"/>
    <property type="match status" value="1"/>
</dbReference>
<protein>
    <recommendedName>
        <fullName evidence="11">Mitogen-activated protein kinase 15</fullName>
        <shortName>MAP kinase 15</shortName>
        <shortName>MAPK 15</shortName>
        <ecNumber>2.7.11.24</ecNumber>
    </recommendedName>
    <alternativeName>
        <fullName>Extracellular signal-regulated kinase 7</fullName>
        <shortName>ERK-7</shortName>
    </alternativeName>
    <alternativeName>
        <fullName>Extracellular signal-regulated kinase 8</fullName>
        <shortName>ERK-8</shortName>
    </alternativeName>
</protein>
<comment type="function">
    <text evidence="1 2 5 8">Atypical MAPK protein that regulates several process such as autophagy, ciliogenesis, protein trafficking/secretion and genome integrity, in a kinase activity-dependent manner. Controls both, basal and starvation-induced autophagy throught its interaction with GABARAP, MAP1LC3B and GABARAPL1 leading to autophagosome formation, SQSTM1 degradation and reduced MAP1LC3B inhibitory phosphorylation. Regulates primary cilium formation and the localization of ciliary proteins involved in cilium structure, transport, and signaling. Prevents the relocation of the sugar-adding enzymes from the Golgi to the endoplasmic reticulum, thereby restricting the production of sugar-coated proteins. Upon amino-acid starvation, mediates transitional endoplasmic reticulum site disassembly and inhibition of secretion. Binds to chromatin leading to MAPK15 activation and interaction with PCNA, that which protects genomic integrity by inhibiting MDM2-mediated degradation of PCNA. Regulates DA transporter (DAT) activity and protein expression via activation of RhoA. In response to H(2)O(2) treatment phosphorylates ELAVL1, thus preventing it from binding to the PDCD4 3'UTR and rendering the PDCD4 mRNA accessible to miR-21 and leading to its degradation and loss of protein expression (By similarity). Also functions in a kinase activity-independent manner as a negative regulator of growth (PubMed:9891064). Phosphorylates in vitro FOS and MBP (PubMed:11875070). During oocyte maturation, plays a key role in the microtubule organization and mei- otic cell cycle progression in oocytes, fertilized eggs, and early embryos (By similarity). Interacts with ESRRA promoting its re-localization from the nucleus to the cytoplasm and then prevents its transcriptional activity (By similarity).</text>
</comment>
<comment type="catalytic activity">
    <reaction>
        <text>L-seryl-[protein] + ATP = O-phospho-L-seryl-[protein] + ADP + H(+)</text>
        <dbReference type="Rhea" id="RHEA:17989"/>
        <dbReference type="Rhea" id="RHEA-COMP:9863"/>
        <dbReference type="Rhea" id="RHEA-COMP:11604"/>
        <dbReference type="ChEBI" id="CHEBI:15378"/>
        <dbReference type="ChEBI" id="CHEBI:29999"/>
        <dbReference type="ChEBI" id="CHEBI:30616"/>
        <dbReference type="ChEBI" id="CHEBI:83421"/>
        <dbReference type="ChEBI" id="CHEBI:456216"/>
        <dbReference type="EC" id="2.7.11.24"/>
    </reaction>
</comment>
<comment type="catalytic activity">
    <reaction>
        <text>L-threonyl-[protein] + ATP = O-phospho-L-threonyl-[protein] + ADP + H(+)</text>
        <dbReference type="Rhea" id="RHEA:46608"/>
        <dbReference type="Rhea" id="RHEA-COMP:11060"/>
        <dbReference type="Rhea" id="RHEA-COMP:11605"/>
        <dbReference type="ChEBI" id="CHEBI:15378"/>
        <dbReference type="ChEBI" id="CHEBI:30013"/>
        <dbReference type="ChEBI" id="CHEBI:30616"/>
        <dbReference type="ChEBI" id="CHEBI:61977"/>
        <dbReference type="ChEBI" id="CHEBI:456216"/>
        <dbReference type="EC" id="2.7.11.24"/>
    </reaction>
</comment>
<comment type="activity regulation">
    <text evidence="2 8">Activated by threonine and tyrosine phosphorylation. Inhibited by dual specificity phosphatases, such as DUSP1 (By similarity). Phosphorylation and activation in response to DNA damaging agents, serum stimulation. Constitutively activated when phosphorylated on Tyr-178. Activity depends on the relative rates of MAPK15 autophosphorylation and dephosphorylation by PTPN1 (By similarity).</text>
</comment>
<comment type="subunit">
    <text evidence="1 2 7">Interacts with CSK/c-Src, ABL1, RET and TGFB1I1. Interacts with GABARAP, MAP1LC3B and GABARAPL1; controls, in a kinase-dependent fashion, both basal and starvation-induced autophagy. Interacts with ESRRA; promotes re-localization of ESRRA to the cytoplasm through a XPO1-dependent mechanism then inhibits ESRRA transcriptional activity. Interacts with PCNA; the interaction is chromatin binding- and kinase activity-dependent and prevents MDM2-mediated PCNA destruction by inhibiting the association of PCNA with MDM2 (By similarity). Interacts with DVL2 (By similarity). Interacts with CLIC3; MAPK15 does not phosphorylates CLIC3 (PubMed:9880541).</text>
</comment>
<comment type="subcellular location">
    <subcellularLocation>
        <location evidence="2">Cytoplasm</location>
        <location evidence="2">Cytoskeleton</location>
        <location evidence="2">Cilium basal body</location>
    </subcellularLocation>
    <subcellularLocation>
        <location evidence="2">Cell junction</location>
        <location evidence="2">Tight junction</location>
    </subcellularLocation>
    <subcellularLocation>
        <location evidence="2">Cytoplasm</location>
        <location evidence="2">Cytoskeleton</location>
        <location evidence="2">Microtubule organizing center</location>
        <location evidence="2">Centrosome</location>
        <location evidence="2">Centriole</location>
    </subcellularLocation>
    <subcellularLocation>
        <location evidence="2">Cytoplasmic vesicle</location>
        <location evidence="2">Autophagosome</location>
    </subcellularLocation>
    <subcellularLocation>
        <location evidence="2">Golgi apparatus</location>
    </subcellularLocation>
    <subcellularLocation>
        <location evidence="7 8">Nucleus</location>
    </subcellularLocation>
    <subcellularLocation>
        <location evidence="2">Cytoplasm</location>
    </subcellularLocation>
    <subcellularLocation>
        <location evidence="1">Cytoplasm</location>
        <location evidence="1">Cytoskeleton</location>
        <location evidence="1">Spindle</location>
    </subcellularLocation>
    <text evidence="1 2">Co-localizes to the cytoplasm only in presence of ESRRA. Translocates to the nucleus upon activation (By similarity). At prometaphase I, metaphase I (MI), anaphase I, telophase I, and metaphase II (MII) stages, is stably detected at the spindle (By similarity).</text>
</comment>
<comment type="tissue specificity">
    <text evidence="6 8">Ubiquitously expressed at a weak level. Highest expression is found in testis and to a lower extent in lung.</text>
</comment>
<comment type="domain">
    <text>C-terminal domain, rather than the kinase activity, is required for the full function of the enzyme. This region may be a protein interaction domain that regulates kinase localization, activation and transcriptional activity. When C-terminally truncated, the enzyme shows a reduction in the Thr-Glu-Tyr (TEY) phosphorylation level, in the in vitro kinase activity, in its nuclear localization and in its inhibitory effect on cell growth.</text>
</comment>
<comment type="domain">
    <text>The N-terminal region (1-20) is the minimal region necessary for ubiquitination and further proteasomal degradation.</text>
</comment>
<comment type="domain">
    <text>The TXY motif contains the threonine and tyrosine residues whose phosphorylation activates the MAP kinases.</text>
</comment>
<comment type="PTM">
    <text evidence="8">Autophosphorylated on Thr-176 and Tyr-178; activates the enzyme.</text>
</comment>
<comment type="PTM">
    <text evidence="2">Dephosphorylated by PTPN1.</text>
</comment>
<comment type="PTM">
    <text evidence="6">Ubiquitinated. Ubiquitination may allow its tight kinase activity regulation and rapid turnover. May be ubiquitinated by a SCF E3 ligase.</text>
</comment>
<comment type="similarity">
    <text evidence="11">Belongs to the protein kinase superfamily. CMGC Ser/Thr protein kinase family. MAP kinase subfamily.</text>
</comment>
<feature type="chain" id="PRO_0000232639" description="Mitogen-activated protein kinase 15">
    <location>
        <begin position="1"/>
        <end position="547"/>
    </location>
</feature>
<feature type="domain" description="Protein kinase" evidence="3">
    <location>
        <begin position="14"/>
        <end position="305"/>
    </location>
</feature>
<feature type="repeat" description="PXXXP motif" evidence="2">
    <location>
        <begin position="378"/>
        <end position="382"/>
    </location>
</feature>
<feature type="repeat" description="PXXXP motif" evidence="2">
    <location>
        <begin position="385"/>
        <end position="389"/>
    </location>
</feature>
<feature type="repeat" description="PXXXP motif; regulates binding with chromatin and interaction with PCNA" evidence="2">
    <location>
        <begin position="393"/>
        <end position="397"/>
    </location>
</feature>
<feature type="repeat" description="PXXXP motif; regulates binding with chromatin and interaction with PCNA" evidence="2">
    <location>
        <begin position="401"/>
        <end position="405"/>
    </location>
</feature>
<feature type="region of interest" description="Ubiquitin-conjugating">
    <location>
        <begin position="1"/>
        <end position="20"/>
    </location>
</feature>
<feature type="region of interest" description="Necessary to interact with ESRRA, to regulate its subcellular localization and to inhibit its transcriptional activity" evidence="2">
    <location>
        <begin position="266"/>
        <end position="286"/>
    </location>
</feature>
<feature type="region of interest" description="Requires for interaction with GABARAP, MAP1LC3B AND GABARAPL1" evidence="2">
    <location>
        <begin position="301"/>
        <end position="380"/>
    </location>
</feature>
<feature type="region of interest" description="Disordered" evidence="4">
    <location>
        <begin position="370"/>
        <end position="503"/>
    </location>
</feature>
<feature type="short sequence motif" description="TXY">
    <location>
        <begin position="176"/>
        <end position="178"/>
    </location>
</feature>
<feature type="compositionally biased region" description="Basic and acidic residues" evidence="4">
    <location>
        <begin position="401"/>
        <end position="414"/>
    </location>
</feature>
<feature type="compositionally biased region" description="Polar residues" evidence="4">
    <location>
        <begin position="454"/>
        <end position="465"/>
    </location>
</feature>
<feature type="compositionally biased region" description="Low complexity" evidence="4">
    <location>
        <begin position="481"/>
        <end position="490"/>
    </location>
</feature>
<feature type="compositionally biased region" description="Basic and acidic residues" evidence="4">
    <location>
        <begin position="491"/>
        <end position="500"/>
    </location>
</feature>
<feature type="active site" description="Proton acceptor" evidence="3">
    <location>
        <position position="138"/>
    </location>
</feature>
<feature type="binding site" evidence="3">
    <location>
        <begin position="20"/>
        <end position="28"/>
    </location>
    <ligand>
        <name>ATP</name>
        <dbReference type="ChEBI" id="CHEBI:30616"/>
    </ligand>
</feature>
<feature type="binding site" evidence="3">
    <location>
        <position position="43"/>
    </location>
    <ligand>
        <name>ATP</name>
        <dbReference type="ChEBI" id="CHEBI:30616"/>
    </ligand>
</feature>
<feature type="modified residue" description="Phosphothreonine" evidence="8">
    <location>
        <position position="176"/>
    </location>
</feature>
<feature type="modified residue" description="Phosphotyrosine" evidence="8">
    <location>
        <position position="178"/>
    </location>
</feature>
<feature type="modified residue" description="Omega-N-methylarginine" evidence="2">
    <location>
        <position position="449"/>
    </location>
</feature>
<feature type="mutagenesis site" description="Loss of autophosphorylation and activity." evidence="8">
    <original>K</original>
    <variation>R</variation>
    <location>
        <position position="43"/>
    </location>
</feature>
<feature type="mutagenesis site" description="Loss of autophosphorylation and activity. Loss of autophosphorylation and activity; when associated with F-178." evidence="8">
    <original>T</original>
    <variation>A</variation>
    <location>
        <position position="176"/>
    </location>
</feature>
<feature type="mutagenesis site" description="Loss of autophosphorylation and activity. Loss of autophosphorylation and activity; when associated with A-176." evidence="8">
    <original>Y</original>
    <variation>F</variation>
    <location>
        <position position="178"/>
    </location>
</feature>
<sequence>MCAAEVDRHVSQRYLIKRRLGKGAYGIVWKAMDRRTGEVVAIKKIFDAFRDQTDAQRTFREIMLLREFGGHPNIIRLLDVIPAKNDRDIYLVFESMDTDLNAVIQKGRLLEDIHKRCIFYQLLRATKFIHSGRVIHRDQKPANVLLDAACRVKLCDFGLARSLSDFPEGPGGQALTEYVATRWYRAPEVLLSSRWYTPGVDMWSLGCILGEMLRGQPLFPGTSTFHQLELILETIPLPSMEELQGLGSDYSALILQNLGSRPRQTLDALLPPDTPPEALDLLKRLLAFAPDKRLSAEQALQHPYVQRFHCPDREWTRGSDVRLPVHEGDQLSAPEYRNRLYQMILERRRNSRSPREEDLGVVASRAELRASQRQSLKPGVLPQVLAETPARKRGPKPQNGHGHDPEHVEVRRQSSDPLYQLPPPGSGERPPGATGEPPSAPSGVKTHVRAVAPSLTSQAAAQAANQPLIRSDPARGGGPRAVGARRVPSRLPREAPEPRPGRRMFGISVSQGAQGAARAALGGYSQAYGTVCRSALGRLPLLPGPRA</sequence>